<protein>
    <recommendedName>
        <fullName evidence="1">Proline--tRNA ligase</fullName>
        <ecNumber evidence="1">6.1.1.15</ecNumber>
    </recommendedName>
    <alternativeName>
        <fullName evidence="1">Prolyl-tRNA synthetase</fullName>
        <shortName evidence="1">ProRS</shortName>
    </alternativeName>
</protein>
<reference key="1">
    <citation type="journal article" date="2005" name="Jpn. Agric. Res. Q.">
        <title>Genome sequence of Xanthomonas oryzae pv. oryzae suggests contribution of large numbers of effector genes and insertion sequences to its race diversity.</title>
        <authorList>
            <person name="Ochiai H."/>
            <person name="Inoue Y."/>
            <person name="Takeya M."/>
            <person name="Sasaki A."/>
            <person name="Kaku H."/>
        </authorList>
    </citation>
    <scope>NUCLEOTIDE SEQUENCE [LARGE SCALE GENOMIC DNA]</scope>
    <source>
        <strain>MAFF 311018</strain>
    </source>
</reference>
<dbReference type="EC" id="6.1.1.15" evidence="1"/>
<dbReference type="EMBL" id="AP008229">
    <property type="protein sequence ID" value="BAE67492.1"/>
    <property type="status" value="ALT_INIT"/>
    <property type="molecule type" value="Genomic_DNA"/>
</dbReference>
<dbReference type="RefSeq" id="WP_011257693.1">
    <property type="nucleotide sequence ID" value="NC_007705.1"/>
</dbReference>
<dbReference type="SMR" id="Q2P7I5"/>
<dbReference type="KEGG" id="xom:XOO0737"/>
<dbReference type="HOGENOM" id="CLU_016739_0_0_6"/>
<dbReference type="GO" id="GO:0005829">
    <property type="term" value="C:cytosol"/>
    <property type="evidence" value="ECO:0007669"/>
    <property type="project" value="TreeGrafter"/>
</dbReference>
<dbReference type="GO" id="GO:0002161">
    <property type="term" value="F:aminoacyl-tRNA deacylase activity"/>
    <property type="evidence" value="ECO:0007669"/>
    <property type="project" value="InterPro"/>
</dbReference>
<dbReference type="GO" id="GO:0005524">
    <property type="term" value="F:ATP binding"/>
    <property type="evidence" value="ECO:0007669"/>
    <property type="project" value="UniProtKB-UniRule"/>
</dbReference>
<dbReference type="GO" id="GO:0004827">
    <property type="term" value="F:proline-tRNA ligase activity"/>
    <property type="evidence" value="ECO:0007669"/>
    <property type="project" value="UniProtKB-UniRule"/>
</dbReference>
<dbReference type="GO" id="GO:0006433">
    <property type="term" value="P:prolyl-tRNA aminoacylation"/>
    <property type="evidence" value="ECO:0007669"/>
    <property type="project" value="UniProtKB-UniRule"/>
</dbReference>
<dbReference type="CDD" id="cd04334">
    <property type="entry name" value="ProRS-INS"/>
    <property type="match status" value="1"/>
</dbReference>
<dbReference type="CDD" id="cd00861">
    <property type="entry name" value="ProRS_anticodon_short"/>
    <property type="match status" value="1"/>
</dbReference>
<dbReference type="CDD" id="cd00779">
    <property type="entry name" value="ProRS_core_prok"/>
    <property type="match status" value="1"/>
</dbReference>
<dbReference type="FunFam" id="3.30.930.10:FF:000012">
    <property type="entry name" value="Proline--tRNA ligase"/>
    <property type="match status" value="1"/>
</dbReference>
<dbReference type="Gene3D" id="3.40.50.800">
    <property type="entry name" value="Anticodon-binding domain"/>
    <property type="match status" value="1"/>
</dbReference>
<dbReference type="Gene3D" id="3.30.930.10">
    <property type="entry name" value="Bira Bifunctional Protein, Domain 2"/>
    <property type="match status" value="2"/>
</dbReference>
<dbReference type="Gene3D" id="3.90.960.10">
    <property type="entry name" value="YbaK/aminoacyl-tRNA synthetase-associated domain"/>
    <property type="match status" value="1"/>
</dbReference>
<dbReference type="HAMAP" id="MF_01569">
    <property type="entry name" value="Pro_tRNA_synth_type1"/>
    <property type="match status" value="1"/>
</dbReference>
<dbReference type="InterPro" id="IPR002314">
    <property type="entry name" value="aa-tRNA-synt_IIb"/>
</dbReference>
<dbReference type="InterPro" id="IPR006195">
    <property type="entry name" value="aa-tRNA-synth_II"/>
</dbReference>
<dbReference type="InterPro" id="IPR045864">
    <property type="entry name" value="aa-tRNA-synth_II/BPL/LPL"/>
</dbReference>
<dbReference type="InterPro" id="IPR004154">
    <property type="entry name" value="Anticodon-bd"/>
</dbReference>
<dbReference type="InterPro" id="IPR036621">
    <property type="entry name" value="Anticodon-bd_dom_sf"/>
</dbReference>
<dbReference type="InterPro" id="IPR002316">
    <property type="entry name" value="Pro-tRNA-ligase_IIa"/>
</dbReference>
<dbReference type="InterPro" id="IPR004500">
    <property type="entry name" value="Pro-tRNA-synth_IIa_bac-type"/>
</dbReference>
<dbReference type="InterPro" id="IPR023717">
    <property type="entry name" value="Pro-tRNA-Synthase_IIa_type1"/>
</dbReference>
<dbReference type="InterPro" id="IPR050062">
    <property type="entry name" value="Pro-tRNA_synthetase"/>
</dbReference>
<dbReference type="InterPro" id="IPR044140">
    <property type="entry name" value="ProRS_anticodon_short"/>
</dbReference>
<dbReference type="InterPro" id="IPR033730">
    <property type="entry name" value="ProRS_core_prok"/>
</dbReference>
<dbReference type="InterPro" id="IPR036754">
    <property type="entry name" value="YbaK/aa-tRNA-synt-asso_dom_sf"/>
</dbReference>
<dbReference type="InterPro" id="IPR007214">
    <property type="entry name" value="YbaK/aa-tRNA-synth-assoc-dom"/>
</dbReference>
<dbReference type="NCBIfam" id="NF006625">
    <property type="entry name" value="PRK09194.1"/>
    <property type="match status" value="1"/>
</dbReference>
<dbReference type="NCBIfam" id="TIGR00409">
    <property type="entry name" value="proS_fam_II"/>
    <property type="match status" value="1"/>
</dbReference>
<dbReference type="PANTHER" id="PTHR42753">
    <property type="entry name" value="MITOCHONDRIAL RIBOSOME PROTEIN L39/PROLYL-TRNA LIGASE FAMILY MEMBER"/>
    <property type="match status" value="1"/>
</dbReference>
<dbReference type="PANTHER" id="PTHR42753:SF2">
    <property type="entry name" value="PROLINE--TRNA LIGASE"/>
    <property type="match status" value="1"/>
</dbReference>
<dbReference type="Pfam" id="PF03129">
    <property type="entry name" value="HGTP_anticodon"/>
    <property type="match status" value="1"/>
</dbReference>
<dbReference type="Pfam" id="PF00587">
    <property type="entry name" value="tRNA-synt_2b"/>
    <property type="match status" value="1"/>
</dbReference>
<dbReference type="Pfam" id="PF04073">
    <property type="entry name" value="tRNA_edit"/>
    <property type="match status" value="1"/>
</dbReference>
<dbReference type="PRINTS" id="PR01046">
    <property type="entry name" value="TRNASYNTHPRO"/>
</dbReference>
<dbReference type="SUPFAM" id="SSF52954">
    <property type="entry name" value="Class II aaRS ABD-related"/>
    <property type="match status" value="1"/>
</dbReference>
<dbReference type="SUPFAM" id="SSF55681">
    <property type="entry name" value="Class II aaRS and biotin synthetases"/>
    <property type="match status" value="1"/>
</dbReference>
<dbReference type="SUPFAM" id="SSF55826">
    <property type="entry name" value="YbaK/ProRS associated domain"/>
    <property type="match status" value="1"/>
</dbReference>
<dbReference type="PROSITE" id="PS50862">
    <property type="entry name" value="AA_TRNA_LIGASE_II"/>
    <property type="match status" value="1"/>
</dbReference>
<keyword id="KW-0030">Aminoacyl-tRNA synthetase</keyword>
<keyword id="KW-0067">ATP-binding</keyword>
<keyword id="KW-0963">Cytoplasm</keyword>
<keyword id="KW-0436">Ligase</keyword>
<keyword id="KW-0547">Nucleotide-binding</keyword>
<keyword id="KW-0648">Protein biosynthesis</keyword>
<feature type="chain" id="PRO_0000248820" description="Proline--tRNA ligase">
    <location>
        <begin position="1"/>
        <end position="564"/>
    </location>
</feature>
<accession>Q2P7I5</accession>
<evidence type="ECO:0000255" key="1">
    <source>
        <dbReference type="HAMAP-Rule" id="MF_01569"/>
    </source>
</evidence>
<evidence type="ECO:0000305" key="2"/>
<comment type="function">
    <text evidence="1">Catalyzes the attachment of proline to tRNA(Pro) in a two-step reaction: proline is first activated by ATP to form Pro-AMP and then transferred to the acceptor end of tRNA(Pro). As ProRS can inadvertently accommodate and process non-cognate amino acids such as alanine and cysteine, to avoid such errors it has two additional distinct editing activities against alanine. One activity is designated as 'pretransfer' editing and involves the tRNA(Pro)-independent hydrolysis of activated Ala-AMP. The other activity is designated 'posttransfer' editing and involves deacylation of mischarged Ala-tRNA(Pro). The misacylated Cys-tRNA(Pro) is not edited by ProRS.</text>
</comment>
<comment type="catalytic activity">
    <reaction evidence="1">
        <text>tRNA(Pro) + L-proline + ATP = L-prolyl-tRNA(Pro) + AMP + diphosphate</text>
        <dbReference type="Rhea" id="RHEA:14305"/>
        <dbReference type="Rhea" id="RHEA-COMP:9700"/>
        <dbReference type="Rhea" id="RHEA-COMP:9702"/>
        <dbReference type="ChEBI" id="CHEBI:30616"/>
        <dbReference type="ChEBI" id="CHEBI:33019"/>
        <dbReference type="ChEBI" id="CHEBI:60039"/>
        <dbReference type="ChEBI" id="CHEBI:78442"/>
        <dbReference type="ChEBI" id="CHEBI:78532"/>
        <dbReference type="ChEBI" id="CHEBI:456215"/>
        <dbReference type="EC" id="6.1.1.15"/>
    </reaction>
</comment>
<comment type="subunit">
    <text evidence="1">Homodimer.</text>
</comment>
<comment type="subcellular location">
    <subcellularLocation>
        <location evidence="1">Cytoplasm</location>
    </subcellularLocation>
</comment>
<comment type="domain">
    <text evidence="1">Consists of three domains: the N-terminal catalytic domain, the editing domain and the C-terminal anticodon-binding domain.</text>
</comment>
<comment type="similarity">
    <text evidence="1">Belongs to the class-II aminoacyl-tRNA synthetase family. ProS type 1 subfamily.</text>
</comment>
<comment type="sequence caution" evidence="2">
    <conflict type="erroneous initiation">
        <sequence resource="EMBL-CDS" id="BAE67492"/>
    </conflict>
</comment>
<gene>
    <name evidence="1" type="primary">proS</name>
    <name type="ordered locus">XOO0737</name>
</gene>
<organism>
    <name type="scientific">Xanthomonas oryzae pv. oryzae (strain MAFF 311018)</name>
    <dbReference type="NCBI Taxonomy" id="342109"/>
    <lineage>
        <taxon>Bacteria</taxon>
        <taxon>Pseudomonadati</taxon>
        <taxon>Pseudomonadota</taxon>
        <taxon>Gammaproteobacteria</taxon>
        <taxon>Lysobacterales</taxon>
        <taxon>Lysobacteraceae</taxon>
        <taxon>Xanthomonas</taxon>
    </lineage>
</organism>
<name>SYP_XANOM</name>
<proteinExistence type="inferred from homology"/>
<sequence>MRLSQFHLHTTKETPADAELVSHRLMLRAGMIRKLASGLYTWSPLGLRVLRKVEAIVREEMDRAGAVEVLFPTIQPRELWDATGRWEKFGGQLLKIKDRKEQEFCYSPTAEEAAAEFARQEINSYKQLPLNFYQIQTKFRDEIRPRFGVMRAREFLMKDAYSFHLTDADMAREYDNMRAAYTRIFTRLGLDFRAVQADSGAIGGDASQEFHVIADSGEDSLAFSTGSDYAANVETASAALPAPRAAASEAMQQVATPTQKTCEDVAQLLGIALQRTVKSVAVMTEAGFVLALVRGDHAVNEIKLAKVPGLAGYRLANETEIRAHLGCEPGFLGPVNTARPVRVVADRDVAALADFVVGANVSGAHLVGVNWGRDLPEPETVADVRNVVEGERAADGGELRLARGIEVGHVFQLGSQYAQALQATVIDEGGKVAVMKMGCYGIGISRIVAAAIEQNHDDAGIIWPAPMAPWQVVVCVINPKQDAQVVSAAQALLDELIAAGLDAALDDRGLRPGAMFADMELLGIPHRVVVSERGLAAGTFEYRARTAAAAENLDKAGLFSRLGR</sequence>